<gene>
    <name evidence="1" type="primary">fmt</name>
    <name type="ordered locus">AAur_1822</name>
</gene>
<protein>
    <recommendedName>
        <fullName evidence="1">Methionyl-tRNA formyltransferase</fullName>
        <ecNumber evidence="1">2.1.2.9</ecNumber>
    </recommendedName>
</protein>
<keyword id="KW-0648">Protein biosynthesis</keyword>
<keyword id="KW-0808">Transferase</keyword>
<accession>A1R5R2</accession>
<comment type="function">
    <text evidence="1">Attaches a formyl group to the free amino group of methionyl-tRNA(fMet). The formyl group appears to play a dual role in the initiator identity of N-formylmethionyl-tRNA by promoting its recognition by IF2 and preventing the misappropriation of this tRNA by the elongation apparatus.</text>
</comment>
<comment type="catalytic activity">
    <reaction evidence="1">
        <text>L-methionyl-tRNA(fMet) + (6R)-10-formyltetrahydrofolate = N-formyl-L-methionyl-tRNA(fMet) + (6S)-5,6,7,8-tetrahydrofolate + H(+)</text>
        <dbReference type="Rhea" id="RHEA:24380"/>
        <dbReference type="Rhea" id="RHEA-COMP:9952"/>
        <dbReference type="Rhea" id="RHEA-COMP:9953"/>
        <dbReference type="ChEBI" id="CHEBI:15378"/>
        <dbReference type="ChEBI" id="CHEBI:57453"/>
        <dbReference type="ChEBI" id="CHEBI:78530"/>
        <dbReference type="ChEBI" id="CHEBI:78844"/>
        <dbReference type="ChEBI" id="CHEBI:195366"/>
        <dbReference type="EC" id="2.1.2.9"/>
    </reaction>
</comment>
<comment type="similarity">
    <text evidence="1">Belongs to the Fmt family.</text>
</comment>
<organism>
    <name type="scientific">Paenarthrobacter aurescens (strain TC1)</name>
    <dbReference type="NCBI Taxonomy" id="290340"/>
    <lineage>
        <taxon>Bacteria</taxon>
        <taxon>Bacillati</taxon>
        <taxon>Actinomycetota</taxon>
        <taxon>Actinomycetes</taxon>
        <taxon>Micrococcales</taxon>
        <taxon>Micrococcaceae</taxon>
        <taxon>Paenarthrobacter</taxon>
    </lineage>
</organism>
<feature type="chain" id="PRO_1000020015" description="Methionyl-tRNA formyltransferase">
    <location>
        <begin position="1"/>
        <end position="306"/>
    </location>
</feature>
<feature type="binding site" evidence="1">
    <location>
        <begin position="108"/>
        <end position="111"/>
    </location>
    <ligand>
        <name>(6S)-5,6,7,8-tetrahydrofolate</name>
        <dbReference type="ChEBI" id="CHEBI:57453"/>
    </ligand>
</feature>
<reference key="1">
    <citation type="journal article" date="2006" name="PLoS Genet.">
        <title>Secrets of soil survival revealed by the genome sequence of Arthrobacter aurescens TC1.</title>
        <authorList>
            <person name="Mongodin E.F."/>
            <person name="Shapir N."/>
            <person name="Daugherty S.C."/>
            <person name="DeBoy R.T."/>
            <person name="Emerson J.B."/>
            <person name="Shvartzbeyn A."/>
            <person name="Radune D."/>
            <person name="Vamathevan J."/>
            <person name="Riggs F."/>
            <person name="Grinberg V."/>
            <person name="Khouri H.M."/>
            <person name="Wackett L.P."/>
            <person name="Nelson K.E."/>
            <person name="Sadowsky M.J."/>
        </authorList>
    </citation>
    <scope>NUCLEOTIDE SEQUENCE [LARGE SCALE GENOMIC DNA]</scope>
    <source>
        <strain>TC1</strain>
    </source>
</reference>
<name>FMT_PAEAT</name>
<dbReference type="EC" id="2.1.2.9" evidence="1"/>
<dbReference type="EMBL" id="CP000474">
    <property type="protein sequence ID" value="ABM09642.1"/>
    <property type="molecule type" value="Genomic_DNA"/>
</dbReference>
<dbReference type="RefSeq" id="WP_011774518.1">
    <property type="nucleotide sequence ID" value="NC_008711.1"/>
</dbReference>
<dbReference type="SMR" id="A1R5R2"/>
<dbReference type="STRING" id="290340.AAur_1822"/>
<dbReference type="KEGG" id="aau:AAur_1822"/>
<dbReference type="eggNOG" id="COG0223">
    <property type="taxonomic scope" value="Bacteria"/>
</dbReference>
<dbReference type="HOGENOM" id="CLU_033347_1_0_11"/>
<dbReference type="OrthoDB" id="9802815at2"/>
<dbReference type="Proteomes" id="UP000000637">
    <property type="component" value="Chromosome"/>
</dbReference>
<dbReference type="GO" id="GO:0005829">
    <property type="term" value="C:cytosol"/>
    <property type="evidence" value="ECO:0007669"/>
    <property type="project" value="TreeGrafter"/>
</dbReference>
<dbReference type="GO" id="GO:0004479">
    <property type="term" value="F:methionyl-tRNA formyltransferase activity"/>
    <property type="evidence" value="ECO:0007669"/>
    <property type="project" value="UniProtKB-UniRule"/>
</dbReference>
<dbReference type="CDD" id="cd08646">
    <property type="entry name" value="FMT_core_Met-tRNA-FMT_N"/>
    <property type="match status" value="1"/>
</dbReference>
<dbReference type="CDD" id="cd08704">
    <property type="entry name" value="Met_tRNA_FMT_C"/>
    <property type="match status" value="1"/>
</dbReference>
<dbReference type="Gene3D" id="3.40.50.12230">
    <property type="match status" value="1"/>
</dbReference>
<dbReference type="HAMAP" id="MF_00182">
    <property type="entry name" value="Formyl_trans"/>
    <property type="match status" value="1"/>
</dbReference>
<dbReference type="InterPro" id="IPR005794">
    <property type="entry name" value="Fmt"/>
</dbReference>
<dbReference type="InterPro" id="IPR005793">
    <property type="entry name" value="Formyl_trans_C"/>
</dbReference>
<dbReference type="InterPro" id="IPR002376">
    <property type="entry name" value="Formyl_transf_N"/>
</dbReference>
<dbReference type="InterPro" id="IPR036477">
    <property type="entry name" value="Formyl_transf_N_sf"/>
</dbReference>
<dbReference type="InterPro" id="IPR011034">
    <property type="entry name" value="Formyl_transferase-like_C_sf"/>
</dbReference>
<dbReference type="InterPro" id="IPR044135">
    <property type="entry name" value="Met-tRNA-FMT_C"/>
</dbReference>
<dbReference type="InterPro" id="IPR041711">
    <property type="entry name" value="Met-tRNA-FMT_N"/>
</dbReference>
<dbReference type="NCBIfam" id="TIGR00460">
    <property type="entry name" value="fmt"/>
    <property type="match status" value="1"/>
</dbReference>
<dbReference type="PANTHER" id="PTHR11138">
    <property type="entry name" value="METHIONYL-TRNA FORMYLTRANSFERASE"/>
    <property type="match status" value="1"/>
</dbReference>
<dbReference type="PANTHER" id="PTHR11138:SF5">
    <property type="entry name" value="METHIONYL-TRNA FORMYLTRANSFERASE, MITOCHONDRIAL"/>
    <property type="match status" value="1"/>
</dbReference>
<dbReference type="Pfam" id="PF02911">
    <property type="entry name" value="Formyl_trans_C"/>
    <property type="match status" value="1"/>
</dbReference>
<dbReference type="Pfam" id="PF00551">
    <property type="entry name" value="Formyl_trans_N"/>
    <property type="match status" value="1"/>
</dbReference>
<dbReference type="SUPFAM" id="SSF50486">
    <property type="entry name" value="FMT C-terminal domain-like"/>
    <property type="match status" value="1"/>
</dbReference>
<dbReference type="SUPFAM" id="SSF53328">
    <property type="entry name" value="Formyltransferase"/>
    <property type="match status" value="1"/>
</dbReference>
<sequence length="306" mass="31935">MRVLFAGTPAVAVPSLDALVKAGFDVVAVLTRPDAPVGRKRVLTPSPVAARAMELGIDVIRAARVDADTTAGIAKYAPDVAAIVAYGGIVPKAALGVPTHGWVNLHFSLLPAWRGAAPVQRSIIAGDDVTGAATFQLEEGLDTGPVFGTLTETVRPEDTAGDLLERLSISGAVLLSQTLSAIDAGQAAPQPQIGEVSHAPKLTLDDGRLDWQQPALALNRRARGVTPEPGAWTTLDGQRVKLEPVALRPEVKDLPPGSIRVDGKSVLVGTGSHAVELGRVQPAGKKMMPPADWARGLATPERVVFE</sequence>
<evidence type="ECO:0000255" key="1">
    <source>
        <dbReference type="HAMAP-Rule" id="MF_00182"/>
    </source>
</evidence>
<proteinExistence type="inferred from homology"/>